<reference key="1">
    <citation type="journal article" date="2000" name="Nucleic Acids Res.">
        <title>Complete genome sequence of the alkaliphilic bacterium Bacillus halodurans and genomic sequence comparison with Bacillus subtilis.</title>
        <authorList>
            <person name="Takami H."/>
            <person name="Nakasone K."/>
            <person name="Takaki Y."/>
            <person name="Maeno G."/>
            <person name="Sasaki R."/>
            <person name="Masui N."/>
            <person name="Fuji F."/>
            <person name="Hirama C."/>
            <person name="Nakamura Y."/>
            <person name="Ogasawara N."/>
            <person name="Kuhara S."/>
            <person name="Horikoshi K."/>
        </authorList>
    </citation>
    <scope>NUCLEOTIDE SEQUENCE [LARGE SCALE GENOMIC DNA]</scope>
    <source>
        <strain>ATCC BAA-125 / DSM 18197 / FERM 7344 / JCM 9153 / C-125</strain>
    </source>
</reference>
<accession>Q9KD74</accession>
<name>HRCA_HALH5</name>
<organism>
    <name type="scientific">Halalkalibacterium halodurans (strain ATCC BAA-125 / DSM 18197 / FERM 7344 / JCM 9153 / C-125)</name>
    <name type="common">Bacillus halodurans</name>
    <dbReference type="NCBI Taxonomy" id="272558"/>
    <lineage>
        <taxon>Bacteria</taxon>
        <taxon>Bacillati</taxon>
        <taxon>Bacillota</taxon>
        <taxon>Bacilli</taxon>
        <taxon>Bacillales</taxon>
        <taxon>Bacillaceae</taxon>
        <taxon>Halalkalibacterium (ex Joshi et al. 2022)</taxon>
    </lineage>
</organism>
<keyword id="KW-1185">Reference proteome</keyword>
<keyword id="KW-0678">Repressor</keyword>
<keyword id="KW-0346">Stress response</keyword>
<keyword id="KW-0804">Transcription</keyword>
<keyword id="KW-0805">Transcription regulation</keyword>
<dbReference type="EMBL" id="BA000004">
    <property type="protein sequence ID" value="BAB05063.1"/>
    <property type="molecule type" value="Genomic_DNA"/>
</dbReference>
<dbReference type="PIR" id="H83817">
    <property type="entry name" value="H83817"/>
</dbReference>
<dbReference type="RefSeq" id="WP_010897510.1">
    <property type="nucleotide sequence ID" value="NC_002570.2"/>
</dbReference>
<dbReference type="SMR" id="Q9KD74"/>
<dbReference type="STRING" id="272558.gene:10727238"/>
<dbReference type="KEGG" id="bha:BH1344"/>
<dbReference type="eggNOG" id="COG1420">
    <property type="taxonomic scope" value="Bacteria"/>
</dbReference>
<dbReference type="HOGENOM" id="CLU_050019_1_0_9"/>
<dbReference type="OrthoDB" id="9783139at2"/>
<dbReference type="Proteomes" id="UP000001258">
    <property type="component" value="Chromosome"/>
</dbReference>
<dbReference type="GO" id="GO:0003677">
    <property type="term" value="F:DNA binding"/>
    <property type="evidence" value="ECO:0007669"/>
    <property type="project" value="InterPro"/>
</dbReference>
<dbReference type="GO" id="GO:0045892">
    <property type="term" value="P:negative regulation of DNA-templated transcription"/>
    <property type="evidence" value="ECO:0007669"/>
    <property type="project" value="UniProtKB-UniRule"/>
</dbReference>
<dbReference type="FunFam" id="1.10.10.10:FF:000049">
    <property type="entry name" value="Heat-inducible transcription repressor HrcA"/>
    <property type="match status" value="1"/>
</dbReference>
<dbReference type="Gene3D" id="3.30.450.40">
    <property type="match status" value="1"/>
</dbReference>
<dbReference type="Gene3D" id="3.30.390.60">
    <property type="entry name" value="Heat-inducible transcription repressor hrca homolog, domain 3"/>
    <property type="match status" value="1"/>
</dbReference>
<dbReference type="Gene3D" id="1.10.10.10">
    <property type="entry name" value="Winged helix-like DNA-binding domain superfamily/Winged helix DNA-binding domain"/>
    <property type="match status" value="1"/>
</dbReference>
<dbReference type="HAMAP" id="MF_00081">
    <property type="entry name" value="HrcA"/>
    <property type="match status" value="1"/>
</dbReference>
<dbReference type="InterPro" id="IPR029016">
    <property type="entry name" value="GAF-like_dom_sf"/>
</dbReference>
<dbReference type="InterPro" id="IPR002571">
    <property type="entry name" value="HrcA"/>
</dbReference>
<dbReference type="InterPro" id="IPR021153">
    <property type="entry name" value="HrcA_C"/>
</dbReference>
<dbReference type="InterPro" id="IPR036388">
    <property type="entry name" value="WH-like_DNA-bd_sf"/>
</dbReference>
<dbReference type="InterPro" id="IPR036390">
    <property type="entry name" value="WH_DNA-bd_sf"/>
</dbReference>
<dbReference type="InterPro" id="IPR005104">
    <property type="entry name" value="WHTH_HrcA_DNA-bd"/>
</dbReference>
<dbReference type="InterPro" id="IPR023120">
    <property type="entry name" value="WHTH_transcript_rep_HrcA_IDD"/>
</dbReference>
<dbReference type="NCBIfam" id="TIGR00331">
    <property type="entry name" value="hrcA"/>
    <property type="match status" value="1"/>
</dbReference>
<dbReference type="PANTHER" id="PTHR34824">
    <property type="entry name" value="HEAT-INDUCIBLE TRANSCRIPTION REPRESSOR HRCA"/>
    <property type="match status" value="1"/>
</dbReference>
<dbReference type="PANTHER" id="PTHR34824:SF1">
    <property type="entry name" value="HEAT-INDUCIBLE TRANSCRIPTION REPRESSOR HRCA"/>
    <property type="match status" value="1"/>
</dbReference>
<dbReference type="Pfam" id="PF01628">
    <property type="entry name" value="HrcA"/>
    <property type="match status" value="1"/>
</dbReference>
<dbReference type="Pfam" id="PF03444">
    <property type="entry name" value="HrcA_DNA-bdg"/>
    <property type="match status" value="1"/>
</dbReference>
<dbReference type="PIRSF" id="PIRSF005485">
    <property type="entry name" value="HrcA"/>
    <property type="match status" value="1"/>
</dbReference>
<dbReference type="SUPFAM" id="SSF55781">
    <property type="entry name" value="GAF domain-like"/>
    <property type="match status" value="1"/>
</dbReference>
<dbReference type="SUPFAM" id="SSF46785">
    <property type="entry name" value="Winged helix' DNA-binding domain"/>
    <property type="match status" value="1"/>
</dbReference>
<feature type="chain" id="PRO_0000182444" description="Heat-inducible transcription repressor HrcA">
    <location>
        <begin position="1"/>
        <end position="343"/>
    </location>
</feature>
<sequence length="343" mass="39348">MLTDRQLLILQAIVDDYIRSAEPVGSRSISKREDITFSPATIRNEMADLEELGFLEKPHSSAGRIPSQKGYRYYVDHLLMPHRLTKKERHYIHELFTKRIQEVEQAIQQSAQILSSMTRYISVVLGPEMFETKLKSIHMIPLTAHSVVVIFVTDTGYVENQTMHLPHSVNPVDLEKTVNILNERLAGVSLFQLREKLNKEVADVLRFHVTNYELVLDLLEKTFEAEKSEKVFYGGKTNLLSQPEFRDVEKIKQILTILEQDDVMHQMIRSSGEQIQVRIGHENNVEAFEDLSVITASYSIGGKHMGTIGIVGPTRMEYRRTISVVEHLSKDLTKLLTDLYQQS</sequence>
<comment type="function">
    <text evidence="1">Negative regulator of class I heat shock genes (grpE-dnaK-dnaJ and groELS operons). Prevents heat-shock induction of these operons.</text>
</comment>
<comment type="similarity">
    <text evidence="1">Belongs to the HrcA family.</text>
</comment>
<gene>
    <name evidence="1" type="primary">hrcA</name>
    <name type="ordered locus">BH1344</name>
</gene>
<protein>
    <recommendedName>
        <fullName evidence="1">Heat-inducible transcription repressor HrcA</fullName>
    </recommendedName>
</protein>
<evidence type="ECO:0000255" key="1">
    <source>
        <dbReference type="HAMAP-Rule" id="MF_00081"/>
    </source>
</evidence>
<proteinExistence type="inferred from homology"/>